<accession>P35248</accession>
<name>SFTPD_RAT</name>
<protein>
    <recommendedName>
        <fullName>Pulmonary surfactant-associated protein D</fullName>
        <shortName>PSP-D</shortName>
        <shortName>SP-D</shortName>
    </recommendedName>
    <alternativeName>
        <fullName>CP4</fullName>
    </alternativeName>
    <alternativeName>
        <fullName>Lung surfactant protein D</fullName>
    </alternativeName>
</protein>
<reference key="1">
    <citation type="journal article" date="1992" name="J. Biol. Chem.">
        <title>Primary structure of rat pulmonary surfactant protein D. cDNA and deduced amino acid sequence.</title>
        <authorList>
            <person name="Shimizu H."/>
            <person name="Fisher J.H."/>
            <person name="Papst P."/>
            <person name="Benson B."/>
            <person name="Lau K."/>
            <person name="Mason R.J."/>
            <person name="Voelker D.R."/>
        </authorList>
    </citation>
    <scope>NUCLEOTIDE SEQUENCE [MRNA]</scope>
    <scope>PROTEIN SEQUENCE OF 20-33</scope>
    <source>
        <tissue>Lung</tissue>
    </source>
</reference>
<reference key="2">
    <citation type="journal article" date="1989" name="Biochemistry">
        <title>Purification and biochemical characterization of CP4 (SP-D), a collagenous surfactant-associated protein.</title>
        <authorList>
            <person name="Persson A."/>
            <person name="Chang D."/>
            <person name="Rust K."/>
            <person name="Moxley M."/>
            <person name="Longmore W."/>
            <person name="Crouch E."/>
        </authorList>
    </citation>
    <scope>PROTEIN SEQUENCE OF 73-95 AND 153-180</scope>
    <scope>HYDROXYLATION AT PRO-77; LYS-86; PRO-95; LYS-98; PRO-170 AND PRO-176</scope>
    <source>
        <tissue>Lung</tissue>
    </source>
</reference>
<reference key="3">
    <citation type="journal article" date="2008" name="PLoS Biol.">
        <title>S-nitrosylation of surfactant protein-D controls inflammatory function.</title>
        <authorList>
            <person name="Guo C.J."/>
            <person name="Atochina-Vasserman E.N."/>
            <person name="Abramova E."/>
            <person name="Foley J.P."/>
            <person name="Zaman A."/>
            <person name="Crouch E."/>
            <person name="Beers M.F."/>
            <person name="Savani R.C."/>
            <person name="Gow A.J."/>
        </authorList>
    </citation>
    <scope>S-NITROSYLATION AT CYS-34 AND CYS-39</scope>
</reference>
<reference key="4">
    <citation type="journal article" date="2012" name="Nat. Commun.">
        <title>Quantitative maps of protein phosphorylation sites across 14 different rat organs and tissues.</title>
        <authorList>
            <person name="Lundby A."/>
            <person name="Secher A."/>
            <person name="Lage K."/>
            <person name="Nordsborg N.B."/>
            <person name="Dmytriyev A."/>
            <person name="Lundby C."/>
            <person name="Olsen J.V."/>
        </authorList>
    </citation>
    <scope>PHOSPHORYLATION [LARGE SCALE ANALYSIS] AT SER-109</scope>
    <scope>IDENTIFICATION BY MASS SPECTROMETRY [LARGE SCALE ANALYSIS]</scope>
</reference>
<gene>
    <name type="primary">Sftpd</name>
    <name type="synonym">Sftp4</name>
</gene>
<sequence length="374" mass="37561">MLHFLSMLVLLVQPLGDLGAEMKTLSQRSITNTCTLVLCSPTENGLPGRDGRDGREGPRGEKGDPGLPGPMGLSGLPGPRGPVGPKGENGSAGEPGPKGERGLVGPPGSPGISGPAGKEGPSGKQGNIGPQGKPGPKGEAGPKGEVGAPGMQGSAGAKGPAGPKGERGAPGEQGAPGNAGAAGPAGPAGPQGAPGSRGPPGLKGDRGAPGDRGIKGESGLPDSAALRQQMEALNGKLQRLEAAFSRYKKAALFPDGQSVGDKIFRAANSEEPFEDAKEMCRQAGGQLASPRSATENAAVQQLVTAHSKAAFLSMTDVGTEGKFTYPTGEALVYSNWAPGEPNNNGGAENCVEIFTNGQWNDKACGEQRLVICEF</sequence>
<dbReference type="EMBL" id="M81231">
    <property type="protein sequence ID" value="AAA42170.1"/>
    <property type="molecule type" value="mRNA"/>
</dbReference>
<dbReference type="PIR" id="A42046">
    <property type="entry name" value="A42046"/>
</dbReference>
<dbReference type="RefSeq" id="NP_037010.1">
    <property type="nucleotide sequence ID" value="NM_012878.3"/>
</dbReference>
<dbReference type="SMR" id="P35248"/>
<dbReference type="BioGRID" id="247389">
    <property type="interactions" value="1"/>
</dbReference>
<dbReference type="DIP" id="DIP-46337N"/>
<dbReference type="FunCoup" id="P35248">
    <property type="interactions" value="132"/>
</dbReference>
<dbReference type="IntAct" id="P35248">
    <property type="interactions" value="1"/>
</dbReference>
<dbReference type="STRING" id="10116.ENSRNOP00000069079"/>
<dbReference type="GlyCosmos" id="P35248">
    <property type="glycosylation" value="1 site, No reported glycans"/>
</dbReference>
<dbReference type="GlyGen" id="P35248">
    <property type="glycosylation" value="1 site"/>
</dbReference>
<dbReference type="iPTMnet" id="P35248"/>
<dbReference type="PhosphoSitePlus" id="P35248"/>
<dbReference type="PaxDb" id="10116-ENSRNOP00000066829"/>
<dbReference type="Ensembl" id="ENSRNOT00000084172.2">
    <property type="protein sequence ID" value="ENSRNOP00000074951.2"/>
    <property type="gene ID" value="ENSRNOG00000056001.2"/>
</dbReference>
<dbReference type="GeneID" id="25350"/>
<dbReference type="KEGG" id="rno:25350"/>
<dbReference type="AGR" id="RGD:3667"/>
<dbReference type="CTD" id="6441"/>
<dbReference type="RGD" id="3667">
    <property type="gene designation" value="Sftpd"/>
</dbReference>
<dbReference type="eggNOG" id="KOG4297">
    <property type="taxonomic scope" value="Eukaryota"/>
</dbReference>
<dbReference type="GeneTree" id="ENSGT00940000155748"/>
<dbReference type="InParanoid" id="P35248"/>
<dbReference type="OrthoDB" id="90814at9989"/>
<dbReference type="PhylomeDB" id="P35248"/>
<dbReference type="Reactome" id="R-RNO-166016">
    <property type="pathway name" value="Toll Like Receptor 4 (TLR4) Cascade"/>
</dbReference>
<dbReference type="Reactome" id="R-RNO-198933">
    <property type="pathway name" value="Immunoregulatory interactions between a Lymphoid and a non-Lymphoid cell"/>
</dbReference>
<dbReference type="Reactome" id="R-RNO-391160">
    <property type="pathway name" value="Signal regulatory protein family interactions"/>
</dbReference>
<dbReference type="Reactome" id="R-RNO-5683826">
    <property type="pathway name" value="Surfactant metabolism"/>
</dbReference>
<dbReference type="Reactome" id="R-RNO-5686938">
    <property type="pathway name" value="Regulation of TLR by endogenous ligand"/>
</dbReference>
<dbReference type="PRO" id="PR:P35248"/>
<dbReference type="Proteomes" id="UP000002494">
    <property type="component" value="Chromosome 16"/>
</dbReference>
<dbReference type="GO" id="GO:0005581">
    <property type="term" value="C:collagen trimer"/>
    <property type="evidence" value="ECO:0007669"/>
    <property type="project" value="UniProtKB-KW"/>
</dbReference>
<dbReference type="GO" id="GO:0005737">
    <property type="term" value="C:cytoplasm"/>
    <property type="evidence" value="ECO:0000266"/>
    <property type="project" value="RGD"/>
</dbReference>
<dbReference type="GO" id="GO:0005615">
    <property type="term" value="C:extracellular space"/>
    <property type="evidence" value="ECO:0000314"/>
    <property type="project" value="RGD"/>
</dbReference>
<dbReference type="GO" id="GO:0005771">
    <property type="term" value="C:multivesicular body"/>
    <property type="evidence" value="ECO:0000314"/>
    <property type="project" value="RGD"/>
</dbReference>
<dbReference type="GO" id="GO:0042802">
    <property type="term" value="F:identical protein binding"/>
    <property type="evidence" value="ECO:0000314"/>
    <property type="project" value="RGD"/>
</dbReference>
<dbReference type="GO" id="GO:0001530">
    <property type="term" value="F:lipopolysaccharide binding"/>
    <property type="evidence" value="ECO:0000314"/>
    <property type="project" value="RGD"/>
</dbReference>
<dbReference type="GO" id="GO:0048029">
    <property type="term" value="F:monosaccharide binding"/>
    <property type="evidence" value="ECO:0000314"/>
    <property type="project" value="RGD"/>
</dbReference>
<dbReference type="GO" id="GO:0045087">
    <property type="term" value="P:innate immune response"/>
    <property type="evidence" value="ECO:0007669"/>
    <property type="project" value="UniProtKB-KW"/>
</dbReference>
<dbReference type="GO" id="GO:0048286">
    <property type="term" value="P:lung alveolus development"/>
    <property type="evidence" value="ECO:0000250"/>
    <property type="project" value="UniProtKB"/>
</dbReference>
<dbReference type="GO" id="GO:0032703">
    <property type="term" value="P:negative regulation of interleukin-2 production"/>
    <property type="evidence" value="ECO:0000314"/>
    <property type="project" value="RGD"/>
</dbReference>
<dbReference type="GO" id="GO:0050765">
    <property type="term" value="P:negative regulation of phagocytosis"/>
    <property type="evidence" value="ECO:0000314"/>
    <property type="project" value="RGD"/>
</dbReference>
<dbReference type="GO" id="GO:0042130">
    <property type="term" value="P:negative regulation of T cell proliferation"/>
    <property type="evidence" value="ECO:0000314"/>
    <property type="project" value="RGD"/>
</dbReference>
<dbReference type="GO" id="GO:0008228">
    <property type="term" value="P:opsonization"/>
    <property type="evidence" value="ECO:0000314"/>
    <property type="project" value="RGD"/>
</dbReference>
<dbReference type="GO" id="GO:0050766">
    <property type="term" value="P:positive regulation of phagocytosis"/>
    <property type="evidence" value="ECO:0000314"/>
    <property type="project" value="RGD"/>
</dbReference>
<dbReference type="GO" id="GO:0007585">
    <property type="term" value="P:respiratory gaseous exchange by respiratory system"/>
    <property type="evidence" value="ECO:0007669"/>
    <property type="project" value="UniProtKB-KW"/>
</dbReference>
<dbReference type="GO" id="GO:0051384">
    <property type="term" value="P:response to glucocorticoid"/>
    <property type="evidence" value="ECO:0000270"/>
    <property type="project" value="RGD"/>
</dbReference>
<dbReference type="GO" id="GO:0070848">
    <property type="term" value="P:response to growth factor"/>
    <property type="evidence" value="ECO:0000270"/>
    <property type="project" value="RGD"/>
</dbReference>
<dbReference type="GO" id="GO:0055093">
    <property type="term" value="P:response to hyperoxia"/>
    <property type="evidence" value="ECO:0000270"/>
    <property type="project" value="RGD"/>
</dbReference>
<dbReference type="GO" id="GO:0043129">
    <property type="term" value="P:surfactant homeostasis"/>
    <property type="evidence" value="ECO:0000314"/>
    <property type="project" value="RGD"/>
</dbReference>
<dbReference type="FunFam" id="1.20.5.360:FF:000001">
    <property type="entry name" value="Pulmonary surfactant-associated protein D"/>
    <property type="match status" value="1"/>
</dbReference>
<dbReference type="FunFam" id="3.10.100.10:FF:000045">
    <property type="entry name" value="Pulmonary surfactant-associated protein D"/>
    <property type="match status" value="1"/>
</dbReference>
<dbReference type="Gene3D" id="3.10.100.10">
    <property type="entry name" value="Mannose-Binding Protein A, subunit A"/>
    <property type="match status" value="1"/>
</dbReference>
<dbReference type="Gene3D" id="1.20.5.360">
    <property type="entry name" value="SFTPD helical domain"/>
    <property type="match status" value="1"/>
</dbReference>
<dbReference type="InterPro" id="IPR001304">
    <property type="entry name" value="C-type_lectin-like"/>
</dbReference>
<dbReference type="InterPro" id="IPR016186">
    <property type="entry name" value="C-type_lectin-like/link_sf"/>
</dbReference>
<dbReference type="InterPro" id="IPR018378">
    <property type="entry name" value="C-type_lectin_CS"/>
</dbReference>
<dbReference type="InterPro" id="IPR051077">
    <property type="entry name" value="Ca-dependent_lectin"/>
</dbReference>
<dbReference type="InterPro" id="IPR008160">
    <property type="entry name" value="Collagen"/>
</dbReference>
<dbReference type="InterPro" id="IPR016187">
    <property type="entry name" value="CTDL_fold"/>
</dbReference>
<dbReference type="InterPro" id="IPR015097">
    <property type="entry name" value="Surfac_D-trimer"/>
</dbReference>
<dbReference type="PANTHER" id="PTHR24024">
    <property type="entry name" value="PULMONARY SURFACTANT-ASSOCIATED PROTEIN A"/>
    <property type="match status" value="1"/>
</dbReference>
<dbReference type="PANTHER" id="PTHR24024:SF15">
    <property type="entry name" value="PULMONARY SURFACTANT-ASSOCIATED PROTEIN D"/>
    <property type="match status" value="1"/>
</dbReference>
<dbReference type="Pfam" id="PF01391">
    <property type="entry name" value="Collagen"/>
    <property type="match status" value="1"/>
</dbReference>
<dbReference type="Pfam" id="PF00059">
    <property type="entry name" value="Lectin_C"/>
    <property type="match status" value="1"/>
</dbReference>
<dbReference type="Pfam" id="PF09006">
    <property type="entry name" value="Surfac_D-trimer"/>
    <property type="match status" value="1"/>
</dbReference>
<dbReference type="SMART" id="SM00034">
    <property type="entry name" value="CLECT"/>
    <property type="match status" value="1"/>
</dbReference>
<dbReference type="SUPFAM" id="SSF56436">
    <property type="entry name" value="C-type lectin-like"/>
    <property type="match status" value="1"/>
</dbReference>
<dbReference type="SUPFAM" id="SSF57944">
    <property type="entry name" value="Triple coiled coil domain of C-type lectins"/>
    <property type="match status" value="1"/>
</dbReference>
<dbReference type="PROSITE" id="PS00615">
    <property type="entry name" value="C_TYPE_LECTIN_1"/>
    <property type="match status" value="1"/>
</dbReference>
<dbReference type="PROSITE" id="PS50041">
    <property type="entry name" value="C_TYPE_LECTIN_2"/>
    <property type="match status" value="1"/>
</dbReference>
<feature type="signal peptide" evidence="4">
    <location>
        <begin position="1"/>
        <end position="19"/>
    </location>
</feature>
<feature type="chain" id="PRO_0000017467" description="Pulmonary surfactant-associated protein D">
    <location>
        <begin position="20"/>
        <end position="374"/>
    </location>
</feature>
<feature type="domain" description="Collagen-like">
    <location>
        <begin position="45"/>
        <end position="221"/>
    </location>
</feature>
<feature type="domain" description="C-type lectin" evidence="2">
    <location>
        <begin position="259"/>
        <end position="374"/>
    </location>
</feature>
<feature type="region of interest" description="Disordered" evidence="3">
    <location>
        <begin position="40"/>
        <end position="221"/>
    </location>
</feature>
<feature type="coiled-coil region" evidence="1">
    <location>
        <begin position="222"/>
        <end position="253"/>
    </location>
</feature>
<feature type="compositionally biased region" description="Basic and acidic residues" evidence="3">
    <location>
        <begin position="49"/>
        <end position="64"/>
    </location>
</feature>
<feature type="compositionally biased region" description="Low complexity" evidence="3">
    <location>
        <begin position="137"/>
        <end position="163"/>
    </location>
</feature>
<feature type="compositionally biased region" description="Low complexity" evidence="3">
    <location>
        <begin position="170"/>
        <end position="200"/>
    </location>
</feature>
<feature type="compositionally biased region" description="Basic and acidic residues" evidence="3">
    <location>
        <begin position="203"/>
        <end position="215"/>
    </location>
</feature>
<feature type="modified residue" description="S-nitrosocysteine" evidence="5">
    <location>
        <position position="34"/>
    </location>
</feature>
<feature type="modified residue" description="S-nitrosocysteine" evidence="5">
    <location>
        <position position="39"/>
    </location>
</feature>
<feature type="modified residue" description="Hydroxyproline" evidence="6">
    <location>
        <position position="77"/>
    </location>
</feature>
<feature type="modified residue" description="5-hydroxylysine" evidence="6">
    <location>
        <position position="86"/>
    </location>
</feature>
<feature type="modified residue" description="Hydroxyproline" evidence="6">
    <location>
        <position position="95"/>
    </location>
</feature>
<feature type="modified residue" description="5-hydroxylysine" evidence="6">
    <location>
        <position position="98"/>
    </location>
</feature>
<feature type="modified residue" description="Phosphoserine" evidence="8">
    <location>
        <position position="109"/>
    </location>
</feature>
<feature type="modified residue" description="Hydroxyproline" evidence="6">
    <location>
        <position position="170"/>
    </location>
</feature>
<feature type="modified residue" description="Hydroxyproline" evidence="6">
    <location>
        <position position="176"/>
    </location>
</feature>
<feature type="glycosylation site" description="N-linked (GlcNAc...) asparagine">
    <location>
        <position position="89"/>
    </location>
</feature>
<feature type="disulfide bond" evidence="2">
    <location>
        <begin position="280"/>
        <end position="372"/>
    </location>
</feature>
<feature type="disulfide bond" evidence="2">
    <location>
        <begin position="350"/>
        <end position="364"/>
    </location>
</feature>
<feature type="sequence conflict" description="In Ref. 2; AA sequence." evidence="7" ref="2">
    <original>N</original>
    <variation>E</variation>
    <location>
        <position position="89"/>
    </location>
</feature>
<feature type="sequence conflict" description="In Ref. 2; AA sequence." evidence="7" ref="2">
    <original>K</original>
    <variation>C</variation>
    <location>
        <position position="164"/>
    </location>
</feature>
<evidence type="ECO:0000255" key="1"/>
<evidence type="ECO:0000255" key="2">
    <source>
        <dbReference type="PROSITE-ProRule" id="PRU00040"/>
    </source>
</evidence>
<evidence type="ECO:0000256" key="3">
    <source>
        <dbReference type="SAM" id="MobiDB-lite"/>
    </source>
</evidence>
<evidence type="ECO:0000269" key="4">
    <source>
    </source>
</evidence>
<evidence type="ECO:0000269" key="5">
    <source>
    </source>
</evidence>
<evidence type="ECO:0000269" key="6">
    <source>
    </source>
</evidence>
<evidence type="ECO:0000305" key="7"/>
<evidence type="ECO:0007744" key="8">
    <source>
    </source>
</evidence>
<proteinExistence type="evidence at protein level"/>
<keyword id="KW-0106">Calcium</keyword>
<keyword id="KW-0175">Coiled coil</keyword>
<keyword id="KW-0176">Collagen</keyword>
<keyword id="KW-0903">Direct protein sequencing</keyword>
<keyword id="KW-1015">Disulfide bond</keyword>
<keyword id="KW-0272">Extracellular matrix</keyword>
<keyword id="KW-0305">Gaseous exchange</keyword>
<keyword id="KW-0325">Glycoprotein</keyword>
<keyword id="KW-0379">Hydroxylation</keyword>
<keyword id="KW-0391">Immunity</keyword>
<keyword id="KW-0399">Innate immunity</keyword>
<keyword id="KW-0430">Lectin</keyword>
<keyword id="KW-0597">Phosphoprotein</keyword>
<keyword id="KW-1185">Reference proteome</keyword>
<keyword id="KW-0677">Repeat</keyword>
<keyword id="KW-0702">S-nitrosylation</keyword>
<keyword id="KW-0964">Secreted</keyword>
<keyword id="KW-0732">Signal</keyword>
<keyword id="KW-0767">Surface film</keyword>
<organism>
    <name type="scientific">Rattus norvegicus</name>
    <name type="common">Rat</name>
    <dbReference type="NCBI Taxonomy" id="10116"/>
    <lineage>
        <taxon>Eukaryota</taxon>
        <taxon>Metazoa</taxon>
        <taxon>Chordata</taxon>
        <taxon>Craniata</taxon>
        <taxon>Vertebrata</taxon>
        <taxon>Euteleostomi</taxon>
        <taxon>Mammalia</taxon>
        <taxon>Eutheria</taxon>
        <taxon>Euarchontoglires</taxon>
        <taxon>Glires</taxon>
        <taxon>Rodentia</taxon>
        <taxon>Myomorpha</taxon>
        <taxon>Muroidea</taxon>
        <taxon>Muridae</taxon>
        <taxon>Murinae</taxon>
        <taxon>Rattus</taxon>
    </lineage>
</organism>
<comment type="function">
    <text>Contributes to the lung's defense against inhaled microorganisms, organic antigens and toxins. Interacts with compounds such as bacterial lipopolysaccharides, oligosaccharides and fatty acids and modulates leukocyte action in immune response. May participate in the extracellular reorganization or turnover of pulmonary surfactant. Binds strongly maltose residues and to a lesser extent other alpha-glucosyl moieties.</text>
</comment>
<comment type="subunit">
    <text>Oligomeric complex of 4 set of homotrimers.</text>
</comment>
<comment type="interaction">
    <interactant intactId="EBI-11328301">
        <id>P35248</id>
    </interactant>
    <interactant intactId="EBI-11328301">
        <id>P35248</id>
        <label>Sftpd</label>
    </interactant>
    <organismsDiffer>false</organismsDiffer>
    <experiments>3</experiments>
</comment>
<comment type="subcellular location">
    <subcellularLocation>
        <location>Secreted</location>
        <location>Extracellular space</location>
        <location>Extracellular matrix</location>
    </subcellularLocation>
    <subcellularLocation>
        <location>Secreted</location>
        <location>Extracellular space</location>
        <location>Surface film</location>
    </subcellularLocation>
</comment>
<comment type="PTM">
    <text evidence="5">S-nitrosylation at Cys-34 and Cys-39 alters the quaternary structure which results in a pro-inflammatory chemoattractive signaling activity with macrophages.</text>
</comment>
<comment type="miscellaneous">
    <text>Pulmonary surfactant consists of 90% lipid and 10% protein. There are 4 surfactant-associated proteins: 2 collagenous, carbohydrate-binding glycoproteins (SP-A and SP-D) and 2 small hydrophobic proteins (SP-B and SP-C).</text>
</comment>
<comment type="similarity">
    <text evidence="7">Belongs to the SFTPD family.</text>
</comment>